<reference key="1">
    <citation type="journal article" date="2009" name="PLoS Genet.">
        <title>Organised genome dynamics in the Escherichia coli species results in highly diverse adaptive paths.</title>
        <authorList>
            <person name="Touchon M."/>
            <person name="Hoede C."/>
            <person name="Tenaillon O."/>
            <person name="Barbe V."/>
            <person name="Baeriswyl S."/>
            <person name="Bidet P."/>
            <person name="Bingen E."/>
            <person name="Bonacorsi S."/>
            <person name="Bouchier C."/>
            <person name="Bouvet O."/>
            <person name="Calteau A."/>
            <person name="Chiapello H."/>
            <person name="Clermont O."/>
            <person name="Cruveiller S."/>
            <person name="Danchin A."/>
            <person name="Diard M."/>
            <person name="Dossat C."/>
            <person name="Karoui M.E."/>
            <person name="Frapy E."/>
            <person name="Garry L."/>
            <person name="Ghigo J.M."/>
            <person name="Gilles A.M."/>
            <person name="Johnson J."/>
            <person name="Le Bouguenec C."/>
            <person name="Lescat M."/>
            <person name="Mangenot S."/>
            <person name="Martinez-Jehanne V."/>
            <person name="Matic I."/>
            <person name="Nassif X."/>
            <person name="Oztas S."/>
            <person name="Petit M.A."/>
            <person name="Pichon C."/>
            <person name="Rouy Z."/>
            <person name="Ruf C.S."/>
            <person name="Schneider D."/>
            <person name="Tourret J."/>
            <person name="Vacherie B."/>
            <person name="Vallenet D."/>
            <person name="Medigue C."/>
            <person name="Rocha E.P.C."/>
            <person name="Denamur E."/>
        </authorList>
    </citation>
    <scope>NUCLEOTIDE SEQUENCE [LARGE SCALE GENOMIC DNA]</scope>
    <source>
        <strain>UMN026 / ExPEC</strain>
    </source>
</reference>
<accession>B7N556</accession>
<proteinExistence type="inferred from homology"/>
<evidence type="ECO:0000255" key="1">
    <source>
        <dbReference type="HAMAP-Rule" id="MF_00184"/>
    </source>
</evidence>
<evidence type="ECO:0000255" key="2">
    <source>
        <dbReference type="PROSITE-ProRule" id="PRU01228"/>
    </source>
</evidence>
<feature type="chain" id="PRO_1000199547" description="Threonine--tRNA ligase">
    <location>
        <begin position="1"/>
        <end position="642"/>
    </location>
</feature>
<feature type="domain" description="TGS" evidence="2">
    <location>
        <begin position="1"/>
        <end position="61"/>
    </location>
</feature>
<feature type="region of interest" description="Catalytic" evidence="1">
    <location>
        <begin position="243"/>
        <end position="534"/>
    </location>
</feature>
<feature type="binding site" evidence="1">
    <location>
        <position position="334"/>
    </location>
    <ligand>
        <name>Zn(2+)</name>
        <dbReference type="ChEBI" id="CHEBI:29105"/>
    </ligand>
</feature>
<feature type="binding site" evidence="1">
    <location>
        <position position="385"/>
    </location>
    <ligand>
        <name>Zn(2+)</name>
        <dbReference type="ChEBI" id="CHEBI:29105"/>
    </ligand>
</feature>
<feature type="binding site" evidence="1">
    <location>
        <position position="511"/>
    </location>
    <ligand>
        <name>Zn(2+)</name>
        <dbReference type="ChEBI" id="CHEBI:29105"/>
    </ligand>
</feature>
<feature type="modified residue" description="N6-acetyllysine" evidence="1">
    <location>
        <position position="286"/>
    </location>
</feature>
<sequence length="642" mass="74014">MPVITLPDGSQRHYDHAVSPMDVALDIGPGLAKACIAGRVNGELVDACDLIENDAQLSIITAKDEEGLEIIRHSCAHLLGHAIKQLWPHTKMAIGPVIDNGFYYDVDLDRTLTQEDVEALEKRMHELAEKNYDVIKKKVSWHEARETFANRGESYKVSILDENIAHDDKPGLYFHEEYVDMCRGPHVPNMRFCHHFKLMKTAGAYWRGDSNNKMLQRIYGTAWADKKALNAYLQRLEEAAKRDHRKIGKQLDLYHMQEEAPGMVFWHNDGWTIFRELEVFVRSKLKEYQYQEVKGPFMMDRVLWEKTGHWDNYKDAMFTTSSENREYCIKPMNCPGHVQIFNQGLKSYRDLPLRMAEFGSCHRNEPSGSLHGLMRVRGFTQDDAHIFCTEEQIRDEVNGCIRLVYDMYSTFGFEKIVVKLSTRPEKRIGSDEMWDRAEADLAVALEENNIPFEYQLGEGAFYGPKIEFTLYDCLDRAWQCGTVQLDFSLPSRLSASYVGEDNERKVPVMIHRAILGSMERFIGILTEEFAGFFPTWLAPVQVVIMNITDSQSEYVNELTQKLSNAGIRVKADLRNEKIGFKIREHTLRRVPYMLVCGDKEVESGKVAVRTRRGKDLGSMDVNEVIEKLQQEIRSRSLKQLEE</sequence>
<gene>
    <name evidence="1" type="primary">thrS</name>
    <name type="ordered locus">ECUMN_2009</name>
</gene>
<name>SYT_ECOLU</name>
<protein>
    <recommendedName>
        <fullName evidence="1">Threonine--tRNA ligase</fullName>
        <ecNumber evidence="1">6.1.1.3</ecNumber>
    </recommendedName>
    <alternativeName>
        <fullName evidence="1">Threonyl-tRNA synthetase</fullName>
        <shortName evidence="1">ThrRS</shortName>
    </alternativeName>
</protein>
<comment type="function">
    <text evidence="1">Catalyzes the attachment of threonine to tRNA(Thr) in a two-step reaction: L-threonine is first activated by ATP to form Thr-AMP and then transferred to the acceptor end of tRNA(Thr). Also edits incorrectly charged L-seryl-tRNA(Thr).</text>
</comment>
<comment type="catalytic activity">
    <reaction evidence="1">
        <text>tRNA(Thr) + L-threonine + ATP = L-threonyl-tRNA(Thr) + AMP + diphosphate + H(+)</text>
        <dbReference type="Rhea" id="RHEA:24624"/>
        <dbReference type="Rhea" id="RHEA-COMP:9670"/>
        <dbReference type="Rhea" id="RHEA-COMP:9704"/>
        <dbReference type="ChEBI" id="CHEBI:15378"/>
        <dbReference type="ChEBI" id="CHEBI:30616"/>
        <dbReference type="ChEBI" id="CHEBI:33019"/>
        <dbReference type="ChEBI" id="CHEBI:57926"/>
        <dbReference type="ChEBI" id="CHEBI:78442"/>
        <dbReference type="ChEBI" id="CHEBI:78534"/>
        <dbReference type="ChEBI" id="CHEBI:456215"/>
        <dbReference type="EC" id="6.1.1.3"/>
    </reaction>
</comment>
<comment type="cofactor">
    <cofactor evidence="1">
        <name>Zn(2+)</name>
        <dbReference type="ChEBI" id="CHEBI:29105"/>
    </cofactor>
    <text evidence="1">Binds 1 zinc ion per subunit.</text>
</comment>
<comment type="subunit">
    <text evidence="1">Homodimer.</text>
</comment>
<comment type="subcellular location">
    <subcellularLocation>
        <location evidence="1">Cytoplasm</location>
    </subcellularLocation>
</comment>
<comment type="similarity">
    <text evidence="1">Belongs to the class-II aminoacyl-tRNA synthetase family.</text>
</comment>
<dbReference type="EC" id="6.1.1.3" evidence="1"/>
<dbReference type="EMBL" id="CU928163">
    <property type="protein sequence ID" value="CAR13205.1"/>
    <property type="molecule type" value="Genomic_DNA"/>
</dbReference>
<dbReference type="RefSeq" id="WP_001144202.1">
    <property type="nucleotide sequence ID" value="NC_011751.1"/>
</dbReference>
<dbReference type="RefSeq" id="YP_002412737.1">
    <property type="nucleotide sequence ID" value="NC_011751.1"/>
</dbReference>
<dbReference type="SMR" id="B7N556"/>
<dbReference type="STRING" id="585056.ECUMN_2009"/>
<dbReference type="GeneID" id="93775932"/>
<dbReference type="KEGG" id="eum:ECUMN_2009"/>
<dbReference type="PATRIC" id="fig|585056.7.peg.2194"/>
<dbReference type="HOGENOM" id="CLU_008554_0_1_6"/>
<dbReference type="Proteomes" id="UP000007097">
    <property type="component" value="Chromosome"/>
</dbReference>
<dbReference type="GO" id="GO:0005829">
    <property type="term" value="C:cytosol"/>
    <property type="evidence" value="ECO:0007669"/>
    <property type="project" value="TreeGrafter"/>
</dbReference>
<dbReference type="GO" id="GO:0005524">
    <property type="term" value="F:ATP binding"/>
    <property type="evidence" value="ECO:0007669"/>
    <property type="project" value="UniProtKB-UniRule"/>
</dbReference>
<dbReference type="GO" id="GO:0046872">
    <property type="term" value="F:metal ion binding"/>
    <property type="evidence" value="ECO:0007669"/>
    <property type="project" value="UniProtKB-KW"/>
</dbReference>
<dbReference type="GO" id="GO:0004829">
    <property type="term" value="F:threonine-tRNA ligase activity"/>
    <property type="evidence" value="ECO:0007669"/>
    <property type="project" value="UniProtKB-UniRule"/>
</dbReference>
<dbReference type="GO" id="GO:0000049">
    <property type="term" value="F:tRNA binding"/>
    <property type="evidence" value="ECO:0007669"/>
    <property type="project" value="UniProtKB-KW"/>
</dbReference>
<dbReference type="GO" id="GO:0006435">
    <property type="term" value="P:threonyl-tRNA aminoacylation"/>
    <property type="evidence" value="ECO:0007669"/>
    <property type="project" value="UniProtKB-UniRule"/>
</dbReference>
<dbReference type="CDD" id="cd01667">
    <property type="entry name" value="TGS_ThrRS"/>
    <property type="match status" value="1"/>
</dbReference>
<dbReference type="CDD" id="cd00860">
    <property type="entry name" value="ThrRS_anticodon"/>
    <property type="match status" value="1"/>
</dbReference>
<dbReference type="CDD" id="cd00771">
    <property type="entry name" value="ThrRS_core"/>
    <property type="match status" value="1"/>
</dbReference>
<dbReference type="FunFam" id="3.10.20.30:FF:000005">
    <property type="entry name" value="Threonine--tRNA ligase"/>
    <property type="match status" value="1"/>
</dbReference>
<dbReference type="FunFam" id="3.30.54.20:FF:000002">
    <property type="entry name" value="Threonine--tRNA ligase"/>
    <property type="match status" value="1"/>
</dbReference>
<dbReference type="FunFam" id="3.30.930.10:FF:000002">
    <property type="entry name" value="Threonine--tRNA ligase"/>
    <property type="match status" value="1"/>
</dbReference>
<dbReference type="FunFam" id="3.40.50.800:FF:000001">
    <property type="entry name" value="Threonine--tRNA ligase"/>
    <property type="match status" value="1"/>
</dbReference>
<dbReference type="FunFam" id="3.30.980.10:FF:000005">
    <property type="entry name" value="Threonyl-tRNA synthetase, mitochondrial"/>
    <property type="match status" value="1"/>
</dbReference>
<dbReference type="Gene3D" id="3.10.20.30">
    <property type="match status" value="1"/>
</dbReference>
<dbReference type="Gene3D" id="3.30.54.20">
    <property type="match status" value="1"/>
</dbReference>
<dbReference type="Gene3D" id="3.40.50.800">
    <property type="entry name" value="Anticodon-binding domain"/>
    <property type="match status" value="1"/>
</dbReference>
<dbReference type="Gene3D" id="3.30.930.10">
    <property type="entry name" value="Bira Bifunctional Protein, Domain 2"/>
    <property type="match status" value="1"/>
</dbReference>
<dbReference type="Gene3D" id="3.30.980.10">
    <property type="entry name" value="Threonyl-trna Synthetase, Chain A, domain 2"/>
    <property type="match status" value="1"/>
</dbReference>
<dbReference type="HAMAP" id="MF_00184">
    <property type="entry name" value="Thr_tRNA_synth"/>
    <property type="match status" value="1"/>
</dbReference>
<dbReference type="InterPro" id="IPR002314">
    <property type="entry name" value="aa-tRNA-synt_IIb"/>
</dbReference>
<dbReference type="InterPro" id="IPR006195">
    <property type="entry name" value="aa-tRNA-synth_II"/>
</dbReference>
<dbReference type="InterPro" id="IPR045864">
    <property type="entry name" value="aa-tRNA-synth_II/BPL/LPL"/>
</dbReference>
<dbReference type="InterPro" id="IPR004154">
    <property type="entry name" value="Anticodon-bd"/>
</dbReference>
<dbReference type="InterPro" id="IPR036621">
    <property type="entry name" value="Anticodon-bd_dom_sf"/>
</dbReference>
<dbReference type="InterPro" id="IPR012675">
    <property type="entry name" value="Beta-grasp_dom_sf"/>
</dbReference>
<dbReference type="InterPro" id="IPR004095">
    <property type="entry name" value="TGS"/>
</dbReference>
<dbReference type="InterPro" id="IPR012676">
    <property type="entry name" value="TGS-like"/>
</dbReference>
<dbReference type="InterPro" id="IPR002320">
    <property type="entry name" value="Thr-tRNA-ligase_IIa"/>
</dbReference>
<dbReference type="InterPro" id="IPR018163">
    <property type="entry name" value="Thr/Ala-tRNA-synth_IIc_edit"/>
</dbReference>
<dbReference type="InterPro" id="IPR047246">
    <property type="entry name" value="ThrRS_anticodon"/>
</dbReference>
<dbReference type="InterPro" id="IPR033728">
    <property type="entry name" value="ThrRS_core"/>
</dbReference>
<dbReference type="InterPro" id="IPR012947">
    <property type="entry name" value="tRNA_SAD"/>
</dbReference>
<dbReference type="NCBIfam" id="TIGR00418">
    <property type="entry name" value="thrS"/>
    <property type="match status" value="1"/>
</dbReference>
<dbReference type="PANTHER" id="PTHR11451:SF44">
    <property type="entry name" value="THREONINE--TRNA LIGASE, CHLOROPLASTIC_MITOCHONDRIAL 2"/>
    <property type="match status" value="1"/>
</dbReference>
<dbReference type="PANTHER" id="PTHR11451">
    <property type="entry name" value="THREONINE-TRNA LIGASE"/>
    <property type="match status" value="1"/>
</dbReference>
<dbReference type="Pfam" id="PF03129">
    <property type="entry name" value="HGTP_anticodon"/>
    <property type="match status" value="1"/>
</dbReference>
<dbReference type="Pfam" id="PF02824">
    <property type="entry name" value="TGS"/>
    <property type="match status" value="1"/>
</dbReference>
<dbReference type="Pfam" id="PF00587">
    <property type="entry name" value="tRNA-synt_2b"/>
    <property type="match status" value="1"/>
</dbReference>
<dbReference type="Pfam" id="PF07973">
    <property type="entry name" value="tRNA_SAD"/>
    <property type="match status" value="1"/>
</dbReference>
<dbReference type="PRINTS" id="PR01047">
    <property type="entry name" value="TRNASYNTHTHR"/>
</dbReference>
<dbReference type="SMART" id="SM00863">
    <property type="entry name" value="tRNA_SAD"/>
    <property type="match status" value="1"/>
</dbReference>
<dbReference type="SUPFAM" id="SSF52954">
    <property type="entry name" value="Class II aaRS ABD-related"/>
    <property type="match status" value="1"/>
</dbReference>
<dbReference type="SUPFAM" id="SSF55681">
    <property type="entry name" value="Class II aaRS and biotin synthetases"/>
    <property type="match status" value="1"/>
</dbReference>
<dbReference type="SUPFAM" id="SSF81271">
    <property type="entry name" value="TGS-like"/>
    <property type="match status" value="1"/>
</dbReference>
<dbReference type="SUPFAM" id="SSF55186">
    <property type="entry name" value="ThrRS/AlaRS common domain"/>
    <property type="match status" value="1"/>
</dbReference>
<dbReference type="PROSITE" id="PS50862">
    <property type="entry name" value="AA_TRNA_LIGASE_II"/>
    <property type="match status" value="1"/>
</dbReference>
<dbReference type="PROSITE" id="PS51880">
    <property type="entry name" value="TGS"/>
    <property type="match status" value="1"/>
</dbReference>
<keyword id="KW-0007">Acetylation</keyword>
<keyword id="KW-0030">Aminoacyl-tRNA synthetase</keyword>
<keyword id="KW-0067">ATP-binding</keyword>
<keyword id="KW-0963">Cytoplasm</keyword>
<keyword id="KW-0436">Ligase</keyword>
<keyword id="KW-0479">Metal-binding</keyword>
<keyword id="KW-0547">Nucleotide-binding</keyword>
<keyword id="KW-0648">Protein biosynthesis</keyword>
<keyword id="KW-0694">RNA-binding</keyword>
<keyword id="KW-0820">tRNA-binding</keyword>
<keyword id="KW-0862">Zinc</keyword>
<organism>
    <name type="scientific">Escherichia coli O17:K52:H18 (strain UMN026 / ExPEC)</name>
    <dbReference type="NCBI Taxonomy" id="585056"/>
    <lineage>
        <taxon>Bacteria</taxon>
        <taxon>Pseudomonadati</taxon>
        <taxon>Pseudomonadota</taxon>
        <taxon>Gammaproteobacteria</taxon>
        <taxon>Enterobacterales</taxon>
        <taxon>Enterobacteriaceae</taxon>
        <taxon>Escherichia</taxon>
    </lineage>
</organism>